<gene>
    <name evidence="1" type="primary">psbY</name>
    <name type="ordered locus">Grc000018</name>
</gene>
<organism>
    <name type="scientific">Gracilaria tenuistipitata var. liui</name>
    <name type="common">Red alga</name>
    <dbReference type="NCBI Taxonomy" id="285951"/>
    <lineage>
        <taxon>Eukaryota</taxon>
        <taxon>Rhodophyta</taxon>
        <taxon>Florideophyceae</taxon>
        <taxon>Rhodymeniophycidae</taxon>
        <taxon>Gracilariales</taxon>
        <taxon>Gracilariaceae</taxon>
        <taxon>Gracilaria</taxon>
        <taxon>Gracilaria tenuistipitata</taxon>
    </lineage>
</organism>
<proteinExistence type="inferred from homology"/>
<keyword id="KW-0150">Chloroplast</keyword>
<keyword id="KW-0472">Membrane</keyword>
<keyword id="KW-0602">Photosynthesis</keyword>
<keyword id="KW-0604">Photosystem II</keyword>
<keyword id="KW-0934">Plastid</keyword>
<keyword id="KW-0793">Thylakoid</keyword>
<keyword id="KW-0812">Transmembrane</keyword>
<keyword id="KW-1133">Transmembrane helix</keyword>
<reference key="1">
    <citation type="journal article" date="2004" name="J. Mol. Evol.">
        <title>Comparative analysis of the complete plastid genome sequence of the red alga Gracilaria tenuistipitata var. liui provides insights into the evolution of rhodoplasts and their relationship to other plastids.</title>
        <authorList>
            <person name="Hagopian J.C."/>
            <person name="Reis M."/>
            <person name="Kitajima J.P."/>
            <person name="Bhattacharya D."/>
            <person name="de Oliveira M.C."/>
        </authorList>
    </citation>
    <scope>NUCLEOTIDE SEQUENCE [LARGE SCALE GENOMIC DNA]</scope>
</reference>
<comment type="function">
    <text evidence="1">Loosely associated component of the core of photosystem II (PSII), it is not always seen in crystals. PSII is a light-driven water plastoquinone oxidoreductase, using light energy to abstract electrons from H(2)O, generating a proton gradient subsequently used for ATP formation.</text>
</comment>
<comment type="subunit">
    <text evidence="1">PSII is composed of 1 copy each of membrane proteins PsbA, PsbB, PsbC, PsbD, PsbE, PsbF, PsbH, PsbI, PsbJ, PsbK, PsbL, PsbM, PsbT, PsbX, PsbY, PsbZ, Psb30/Ycf12, at least 3 peripheral proteins of the oxygen-evolving complex and a large number of cofactors. It forms dimeric complexes.</text>
</comment>
<comment type="subcellular location">
    <subcellularLocation>
        <location evidence="1">Plastid</location>
        <location evidence="1">Chloroplast thylakoid membrane</location>
        <topology evidence="1">Single-pass membrane protein</topology>
    </subcellularLocation>
</comment>
<comment type="similarity">
    <text evidence="1">Belongs to the PsbY family.</text>
</comment>
<geneLocation type="chloroplast"/>
<evidence type="ECO:0000255" key="1">
    <source>
        <dbReference type="HAMAP-Rule" id="MF_00717"/>
    </source>
</evidence>
<dbReference type="EMBL" id="AY673996">
    <property type="protein sequence ID" value="AAT79600.1"/>
    <property type="molecule type" value="Genomic_DNA"/>
</dbReference>
<dbReference type="SMR" id="Q6B935"/>
<dbReference type="GO" id="GO:0009535">
    <property type="term" value="C:chloroplast thylakoid membrane"/>
    <property type="evidence" value="ECO:0007669"/>
    <property type="project" value="UniProtKB-SubCell"/>
</dbReference>
<dbReference type="GO" id="GO:0009523">
    <property type="term" value="C:photosystem II"/>
    <property type="evidence" value="ECO:0007669"/>
    <property type="project" value="UniProtKB-KW"/>
</dbReference>
<dbReference type="GO" id="GO:0030145">
    <property type="term" value="F:manganese ion binding"/>
    <property type="evidence" value="ECO:0007669"/>
    <property type="project" value="InterPro"/>
</dbReference>
<dbReference type="GO" id="GO:0015979">
    <property type="term" value="P:photosynthesis"/>
    <property type="evidence" value="ECO:0007669"/>
    <property type="project" value="UniProtKB-UniRule"/>
</dbReference>
<dbReference type="HAMAP" id="MF_00717">
    <property type="entry name" value="PSII_PsbY"/>
    <property type="match status" value="1"/>
</dbReference>
<dbReference type="InterPro" id="IPR009388">
    <property type="entry name" value="PSII_PsbY"/>
</dbReference>
<dbReference type="NCBIfam" id="NF009711">
    <property type="entry name" value="PRK13240.1"/>
    <property type="match status" value="1"/>
</dbReference>
<dbReference type="Pfam" id="PF06298">
    <property type="entry name" value="PsbY"/>
    <property type="match status" value="1"/>
</dbReference>
<name>PSBY_GRATL</name>
<accession>Q6B935</accession>
<protein>
    <recommendedName>
        <fullName evidence="1">Photosystem II reaction center protein Y</fullName>
    </recommendedName>
</protein>
<sequence>MDIRLLIVLLPVLAAASWALYNIGRVALQQFRSM</sequence>
<feature type="chain" id="PRO_0000216887" description="Photosystem II reaction center protein Y">
    <location>
        <begin position="1"/>
        <end position="34"/>
    </location>
</feature>
<feature type="topological domain" description="Lumenal" evidence="1">
    <location>
        <begin position="1"/>
        <end position="4"/>
    </location>
</feature>
<feature type="transmembrane region" description="Helical" evidence="1">
    <location>
        <begin position="5"/>
        <end position="23"/>
    </location>
</feature>
<feature type="topological domain" description="Stromal" evidence="1">
    <location>
        <begin position="24"/>
        <end position="34"/>
    </location>
</feature>